<gene>
    <name evidence="1" type="primary">mqo</name>
    <name type="ordered locus">BCA_3044</name>
</gene>
<comment type="catalytic activity">
    <reaction evidence="1">
        <text>(S)-malate + a quinone = a quinol + oxaloacetate</text>
        <dbReference type="Rhea" id="RHEA:46012"/>
        <dbReference type="ChEBI" id="CHEBI:15589"/>
        <dbReference type="ChEBI" id="CHEBI:16452"/>
        <dbReference type="ChEBI" id="CHEBI:24646"/>
        <dbReference type="ChEBI" id="CHEBI:132124"/>
        <dbReference type="EC" id="1.1.5.4"/>
    </reaction>
</comment>
<comment type="cofactor">
    <cofactor evidence="1">
        <name>FAD</name>
        <dbReference type="ChEBI" id="CHEBI:57692"/>
    </cofactor>
</comment>
<comment type="pathway">
    <text evidence="1">Carbohydrate metabolism; tricarboxylic acid cycle; oxaloacetate from (S)-malate (quinone route): step 1/1.</text>
</comment>
<comment type="similarity">
    <text evidence="1">Belongs to the MQO family.</text>
</comment>
<dbReference type="EC" id="1.1.5.4" evidence="1"/>
<dbReference type="EMBL" id="CP001407">
    <property type="protein sequence ID" value="ACO29026.1"/>
    <property type="molecule type" value="Genomic_DNA"/>
</dbReference>
<dbReference type="RefSeq" id="WP_000069158.1">
    <property type="nucleotide sequence ID" value="NZ_CP009318.1"/>
</dbReference>
<dbReference type="SMR" id="C1EYZ6"/>
<dbReference type="KEGG" id="bcx:BCA_3044"/>
<dbReference type="PATRIC" id="fig|572264.18.peg.2996"/>
<dbReference type="UniPathway" id="UPA00223">
    <property type="reaction ID" value="UER01008"/>
</dbReference>
<dbReference type="Proteomes" id="UP000002210">
    <property type="component" value="Chromosome"/>
</dbReference>
<dbReference type="GO" id="GO:0047545">
    <property type="term" value="F:2-hydroxyglutarate dehydrogenase activity"/>
    <property type="evidence" value="ECO:0007669"/>
    <property type="project" value="TreeGrafter"/>
</dbReference>
<dbReference type="GO" id="GO:0008924">
    <property type="term" value="F:L-malate dehydrogenase (quinone) activity"/>
    <property type="evidence" value="ECO:0007669"/>
    <property type="project" value="UniProtKB-UniRule"/>
</dbReference>
<dbReference type="GO" id="GO:0006099">
    <property type="term" value="P:tricarboxylic acid cycle"/>
    <property type="evidence" value="ECO:0007669"/>
    <property type="project" value="UniProtKB-UniRule"/>
</dbReference>
<dbReference type="HAMAP" id="MF_00212">
    <property type="entry name" value="MQO"/>
    <property type="match status" value="1"/>
</dbReference>
<dbReference type="InterPro" id="IPR036188">
    <property type="entry name" value="FAD/NAD-bd_sf"/>
</dbReference>
<dbReference type="InterPro" id="IPR006231">
    <property type="entry name" value="MQO"/>
</dbReference>
<dbReference type="NCBIfam" id="TIGR01320">
    <property type="entry name" value="mal_quin_oxido"/>
    <property type="match status" value="1"/>
</dbReference>
<dbReference type="NCBIfam" id="NF003603">
    <property type="entry name" value="PRK05257.1-1"/>
    <property type="match status" value="1"/>
</dbReference>
<dbReference type="NCBIfam" id="NF003604">
    <property type="entry name" value="PRK05257.1-3"/>
    <property type="match status" value="1"/>
</dbReference>
<dbReference type="NCBIfam" id="NF003605">
    <property type="entry name" value="PRK05257.1-4"/>
    <property type="match status" value="1"/>
</dbReference>
<dbReference type="NCBIfam" id="NF003606">
    <property type="entry name" value="PRK05257.2-1"/>
    <property type="match status" value="1"/>
</dbReference>
<dbReference type="NCBIfam" id="NF003608">
    <property type="entry name" value="PRK05257.2-4"/>
    <property type="match status" value="1"/>
</dbReference>
<dbReference type="NCBIfam" id="NF003610">
    <property type="entry name" value="PRK05257.3-1"/>
    <property type="match status" value="1"/>
</dbReference>
<dbReference type="NCBIfam" id="NF003611">
    <property type="entry name" value="PRK05257.3-2"/>
    <property type="match status" value="1"/>
</dbReference>
<dbReference type="NCBIfam" id="NF009875">
    <property type="entry name" value="PRK13339.1"/>
    <property type="match status" value="1"/>
</dbReference>
<dbReference type="PANTHER" id="PTHR43104">
    <property type="entry name" value="L-2-HYDROXYGLUTARATE DEHYDROGENASE, MITOCHONDRIAL"/>
    <property type="match status" value="1"/>
</dbReference>
<dbReference type="PANTHER" id="PTHR43104:SF2">
    <property type="entry name" value="L-2-HYDROXYGLUTARATE DEHYDROGENASE, MITOCHONDRIAL"/>
    <property type="match status" value="1"/>
</dbReference>
<dbReference type="Pfam" id="PF06039">
    <property type="entry name" value="Mqo"/>
    <property type="match status" value="1"/>
</dbReference>
<dbReference type="SUPFAM" id="SSF51905">
    <property type="entry name" value="FAD/NAD(P)-binding domain"/>
    <property type="match status" value="1"/>
</dbReference>
<evidence type="ECO:0000255" key="1">
    <source>
        <dbReference type="HAMAP-Rule" id="MF_00212"/>
    </source>
</evidence>
<organism>
    <name type="scientific">Bacillus cereus (strain 03BB102)</name>
    <dbReference type="NCBI Taxonomy" id="572264"/>
    <lineage>
        <taxon>Bacteria</taxon>
        <taxon>Bacillati</taxon>
        <taxon>Bacillota</taxon>
        <taxon>Bacilli</taxon>
        <taxon>Bacillales</taxon>
        <taxon>Bacillaceae</taxon>
        <taxon>Bacillus</taxon>
        <taxon>Bacillus cereus group</taxon>
    </lineage>
</organism>
<protein>
    <recommendedName>
        <fullName evidence="1">Probable malate:quinone oxidoreductase</fullName>
        <ecNumber evidence="1">1.1.5.4</ecNumber>
    </recommendedName>
    <alternativeName>
        <fullName evidence="1">MQO</fullName>
    </alternativeName>
    <alternativeName>
        <fullName evidence="1">Malate dehydrogenase [quinone]</fullName>
    </alternativeName>
</protein>
<name>MQO_BACC3</name>
<sequence length="500" mass="55181">MSNMQQKTDVILIGAGIMSATLGSLLKELAPEWEIKVFEKLASAGEESSNEWNNAGTGHSALCELNYTSEKSDGSIDISKAVKVNEQFQLSRQFWAYLVKSKLIRNPQDFIMPLPHMSLVQGEKNVEFLKNRFEALSKNPLFQGMEFSDAPETLKKWLPLIMEGRTSNEPMAATKIDSGTDVNFGALTRMLFDYLKTKDVELNYKHSVENIKRTKNGLWEVKVHDMNSGKIEHHTAKFVFIGGGGGSLPLLQKTGIPESKHIGGFPVSGLFMVCKNQKVVEQHHAKVYGKAKVGAPPMSVPHLDTRYIDNKKALLFGPFAGFSPKFLKTGSNLDLIGSVKPNNVLTMLAAGVKEMGLTKYLIQQVMLSHEKRMEELREFIPNAKSEDWDIVVAGQRVQVIKDTDAGGKGTLQFGTEVVSAADGSIAALLGASPGASTAVHVMLEVLEKCFPSRMVEWEGKIKEMIPSYGISLTENPRLFQDLHTSTGRTLGLNEKETVHN</sequence>
<feature type="chain" id="PRO_1000124764" description="Probable malate:quinone oxidoreductase">
    <location>
        <begin position="1"/>
        <end position="500"/>
    </location>
</feature>
<accession>C1EYZ6</accession>
<proteinExistence type="inferred from homology"/>
<reference key="1">
    <citation type="submission" date="2009-02" db="EMBL/GenBank/DDBJ databases">
        <title>Genome sequence of Bacillus cereus 03BB102.</title>
        <authorList>
            <person name="Dodson R.J."/>
            <person name="Jackson P."/>
            <person name="Munk A.C."/>
            <person name="Brettin T."/>
            <person name="Bruce D."/>
            <person name="Detter C."/>
            <person name="Tapia R."/>
            <person name="Han C."/>
            <person name="Sutton G."/>
            <person name="Sims D."/>
        </authorList>
    </citation>
    <scope>NUCLEOTIDE SEQUENCE [LARGE SCALE GENOMIC DNA]</scope>
    <source>
        <strain>03BB102</strain>
    </source>
</reference>
<keyword id="KW-0274">FAD</keyword>
<keyword id="KW-0285">Flavoprotein</keyword>
<keyword id="KW-0560">Oxidoreductase</keyword>
<keyword id="KW-0816">Tricarboxylic acid cycle</keyword>